<comment type="function">
    <text evidence="1">F(1)F(0) ATP synthase produces ATP from ADP in the presence of a proton or sodium gradient. F-type ATPases consist of two structural domains, F(1) containing the extramembraneous catalytic core and F(0) containing the membrane proton channel, linked together by a central stalk and a peripheral stalk. During catalysis, ATP synthesis in the catalytic domain of F(1) is coupled via a rotary mechanism of the central stalk subunits to proton translocation.</text>
</comment>
<comment type="function">
    <text evidence="1">Key component of the F(0) channel; it plays a direct role in translocation across the membrane. A homomeric c-ring of between 10-14 subunits forms the central stalk rotor element with the F(1) delta and epsilon subunits.</text>
</comment>
<comment type="subunit">
    <text evidence="1">F-type ATPases have 2 components, F(1) - the catalytic core - and F(0) - the membrane proton channel. F(1) has five subunits: alpha(3), beta(3), gamma(1), delta(1), epsilon(1). F(0) has three main subunits: a(1), b(2) and c(10-14). The alpha and beta chains form an alternating ring which encloses part of the gamma chain. F(1) is attached to F(0) by a central stalk formed by the gamma and epsilon chains, while a peripheral stalk is formed by the delta and b chains.</text>
</comment>
<comment type="subcellular location">
    <subcellularLocation>
        <location evidence="1">Cell membrane</location>
        <topology evidence="1">Multi-pass membrane protein</topology>
    </subcellularLocation>
</comment>
<comment type="similarity">
    <text evidence="1">Belongs to the ATPase C chain family.</text>
</comment>
<protein>
    <recommendedName>
        <fullName evidence="1">ATP synthase subunit c</fullName>
    </recommendedName>
    <alternativeName>
        <fullName evidence="1">ATP synthase F(0) sector subunit c</fullName>
    </alternativeName>
    <alternativeName>
        <fullName evidence="1">F-type ATPase subunit c</fullName>
        <shortName evidence="1">F-ATPase subunit c</shortName>
    </alternativeName>
    <alternativeName>
        <fullName evidence="1">Lipid-binding protein</fullName>
    </alternativeName>
</protein>
<accession>Q72XE3</accession>
<reference key="1">
    <citation type="journal article" date="2004" name="Nucleic Acids Res.">
        <title>The genome sequence of Bacillus cereus ATCC 10987 reveals metabolic adaptations and a large plasmid related to Bacillus anthracis pXO1.</title>
        <authorList>
            <person name="Rasko D.A."/>
            <person name="Ravel J."/>
            <person name="Oekstad O.A."/>
            <person name="Helgason E."/>
            <person name="Cer R.Z."/>
            <person name="Jiang L."/>
            <person name="Shores K.A."/>
            <person name="Fouts D.E."/>
            <person name="Tourasse N.J."/>
            <person name="Angiuoli S.V."/>
            <person name="Kolonay J.F."/>
            <person name="Nelson W.C."/>
            <person name="Kolstoe A.-B."/>
            <person name="Fraser C.M."/>
            <person name="Read T.D."/>
        </authorList>
    </citation>
    <scope>NUCLEOTIDE SEQUENCE [LARGE SCALE GENOMIC DNA]</scope>
    <source>
        <strain>ATCC 10987 / NRS 248</strain>
    </source>
</reference>
<keyword id="KW-0066">ATP synthesis</keyword>
<keyword id="KW-1003">Cell membrane</keyword>
<keyword id="KW-0138">CF(0)</keyword>
<keyword id="KW-0375">Hydrogen ion transport</keyword>
<keyword id="KW-0406">Ion transport</keyword>
<keyword id="KW-0446">Lipid-binding</keyword>
<keyword id="KW-0472">Membrane</keyword>
<keyword id="KW-0812">Transmembrane</keyword>
<keyword id="KW-1133">Transmembrane helix</keyword>
<keyword id="KW-0813">Transport</keyword>
<name>ATPL_BACC1</name>
<proteinExistence type="inferred from homology"/>
<dbReference type="EMBL" id="AE017194">
    <property type="protein sequence ID" value="AAS44335.1"/>
    <property type="molecule type" value="Genomic_DNA"/>
</dbReference>
<dbReference type="SMR" id="Q72XE3"/>
<dbReference type="KEGG" id="bca:BCE_5435"/>
<dbReference type="HOGENOM" id="CLU_148047_1_1_9"/>
<dbReference type="Proteomes" id="UP000002527">
    <property type="component" value="Chromosome"/>
</dbReference>
<dbReference type="GO" id="GO:0005886">
    <property type="term" value="C:plasma membrane"/>
    <property type="evidence" value="ECO:0007669"/>
    <property type="project" value="UniProtKB-SubCell"/>
</dbReference>
<dbReference type="GO" id="GO:0045259">
    <property type="term" value="C:proton-transporting ATP synthase complex"/>
    <property type="evidence" value="ECO:0007669"/>
    <property type="project" value="UniProtKB-KW"/>
</dbReference>
<dbReference type="GO" id="GO:0033177">
    <property type="term" value="C:proton-transporting two-sector ATPase complex, proton-transporting domain"/>
    <property type="evidence" value="ECO:0007669"/>
    <property type="project" value="InterPro"/>
</dbReference>
<dbReference type="GO" id="GO:0008289">
    <property type="term" value="F:lipid binding"/>
    <property type="evidence" value="ECO:0007669"/>
    <property type="project" value="UniProtKB-KW"/>
</dbReference>
<dbReference type="GO" id="GO:0046933">
    <property type="term" value="F:proton-transporting ATP synthase activity, rotational mechanism"/>
    <property type="evidence" value="ECO:0007669"/>
    <property type="project" value="UniProtKB-UniRule"/>
</dbReference>
<dbReference type="CDD" id="cd18185">
    <property type="entry name" value="ATP-synt_Fo_c_ATPE"/>
    <property type="match status" value="1"/>
</dbReference>
<dbReference type="FunFam" id="1.20.20.10:FF:000004">
    <property type="entry name" value="ATP synthase subunit c"/>
    <property type="match status" value="1"/>
</dbReference>
<dbReference type="Gene3D" id="1.20.20.10">
    <property type="entry name" value="F1F0 ATP synthase subunit C"/>
    <property type="match status" value="1"/>
</dbReference>
<dbReference type="HAMAP" id="MF_01396">
    <property type="entry name" value="ATP_synth_c_bact"/>
    <property type="match status" value="1"/>
</dbReference>
<dbReference type="InterPro" id="IPR005953">
    <property type="entry name" value="ATP_synth_csu_bac/chlpt"/>
</dbReference>
<dbReference type="InterPro" id="IPR000454">
    <property type="entry name" value="ATP_synth_F0_csu"/>
</dbReference>
<dbReference type="InterPro" id="IPR020537">
    <property type="entry name" value="ATP_synth_F0_csu_DDCD_BS"/>
</dbReference>
<dbReference type="InterPro" id="IPR038662">
    <property type="entry name" value="ATP_synth_F0_csu_sf"/>
</dbReference>
<dbReference type="InterPro" id="IPR002379">
    <property type="entry name" value="ATPase_proteolipid_c-like_dom"/>
</dbReference>
<dbReference type="InterPro" id="IPR035921">
    <property type="entry name" value="F/V-ATP_Csub_sf"/>
</dbReference>
<dbReference type="NCBIfam" id="TIGR01260">
    <property type="entry name" value="ATP_synt_c"/>
    <property type="match status" value="1"/>
</dbReference>
<dbReference type="NCBIfam" id="NF005363">
    <property type="entry name" value="PRK06876.1"/>
    <property type="match status" value="1"/>
</dbReference>
<dbReference type="PANTHER" id="PTHR10031">
    <property type="entry name" value="ATP SYNTHASE LIPID-BINDING PROTEIN, MITOCHONDRIAL"/>
    <property type="match status" value="1"/>
</dbReference>
<dbReference type="PANTHER" id="PTHR10031:SF0">
    <property type="entry name" value="ATPASE PROTEIN 9"/>
    <property type="match status" value="1"/>
</dbReference>
<dbReference type="Pfam" id="PF00137">
    <property type="entry name" value="ATP-synt_C"/>
    <property type="match status" value="1"/>
</dbReference>
<dbReference type="PRINTS" id="PR00124">
    <property type="entry name" value="ATPASEC"/>
</dbReference>
<dbReference type="SUPFAM" id="SSF81333">
    <property type="entry name" value="F1F0 ATP synthase subunit C"/>
    <property type="match status" value="1"/>
</dbReference>
<dbReference type="PROSITE" id="PS00605">
    <property type="entry name" value="ATPASE_C"/>
    <property type="match status" value="1"/>
</dbReference>
<feature type="chain" id="PRO_0000365844" description="ATP synthase subunit c">
    <location>
        <begin position="1"/>
        <end position="72"/>
    </location>
</feature>
<feature type="transmembrane region" description="Helical" evidence="1">
    <location>
        <begin position="1"/>
        <end position="21"/>
    </location>
</feature>
<feature type="transmembrane region" description="Helical" evidence="1">
    <location>
        <begin position="49"/>
        <end position="69"/>
    </location>
</feature>
<feature type="site" description="Reversibly protonated during proton transport" evidence="1">
    <location>
        <position position="56"/>
    </location>
</feature>
<organism>
    <name type="scientific">Bacillus cereus (strain ATCC 10987 / NRS 248)</name>
    <dbReference type="NCBI Taxonomy" id="222523"/>
    <lineage>
        <taxon>Bacteria</taxon>
        <taxon>Bacillati</taxon>
        <taxon>Bacillota</taxon>
        <taxon>Bacilli</taxon>
        <taxon>Bacillales</taxon>
        <taxon>Bacillaceae</taxon>
        <taxon>Bacillus</taxon>
        <taxon>Bacillus cereus group</taxon>
    </lineage>
</organism>
<gene>
    <name evidence="1" type="primary">atpE</name>
    <name type="ordered locus">BCE_5435</name>
</gene>
<evidence type="ECO:0000255" key="1">
    <source>
        <dbReference type="HAMAP-Rule" id="MF_01396"/>
    </source>
</evidence>
<sequence>MSLGVIAAAIAIGLSALGAGIGNGLIVSRTIEGVARQPELKGALQTIMFIGVALVEALPIIGVVIAFIVMNK</sequence>